<accession>B1HPY0</accession>
<name>RSMH_LYSSC</name>
<feature type="chain" id="PRO_0000386964" description="Ribosomal RNA small subunit methyltransferase H">
    <location>
        <begin position="1"/>
        <end position="316"/>
    </location>
</feature>
<feature type="binding site" evidence="1">
    <location>
        <begin position="32"/>
        <end position="34"/>
    </location>
    <ligand>
        <name>S-adenosyl-L-methionine</name>
        <dbReference type="ChEBI" id="CHEBI:59789"/>
    </ligand>
</feature>
<feature type="binding site" evidence="1">
    <location>
        <position position="52"/>
    </location>
    <ligand>
        <name>S-adenosyl-L-methionine</name>
        <dbReference type="ChEBI" id="CHEBI:59789"/>
    </ligand>
</feature>
<feature type="binding site" evidence="1">
    <location>
        <position position="79"/>
    </location>
    <ligand>
        <name>S-adenosyl-L-methionine</name>
        <dbReference type="ChEBI" id="CHEBI:59789"/>
    </ligand>
</feature>
<feature type="binding site" evidence="1">
    <location>
        <position position="100"/>
    </location>
    <ligand>
        <name>S-adenosyl-L-methionine</name>
        <dbReference type="ChEBI" id="CHEBI:59789"/>
    </ligand>
</feature>
<feature type="binding site" evidence="1">
    <location>
        <position position="107"/>
    </location>
    <ligand>
        <name>S-adenosyl-L-methionine</name>
        <dbReference type="ChEBI" id="CHEBI:59789"/>
    </ligand>
</feature>
<dbReference type="EC" id="2.1.1.199" evidence="1"/>
<dbReference type="EMBL" id="CP000817">
    <property type="protein sequence ID" value="ACA39032.1"/>
    <property type="molecule type" value="Genomic_DNA"/>
</dbReference>
<dbReference type="RefSeq" id="WP_012293152.1">
    <property type="nucleotide sequence ID" value="NC_010382.1"/>
</dbReference>
<dbReference type="SMR" id="B1HPY0"/>
<dbReference type="EnsemblBacteria" id="ACA39032">
    <property type="protein sequence ID" value="ACA39032"/>
    <property type="gene ID" value="Bsph_1426"/>
</dbReference>
<dbReference type="KEGG" id="lsp:Bsph_1426"/>
<dbReference type="HOGENOM" id="CLU_038422_2_0_9"/>
<dbReference type="Proteomes" id="UP000002164">
    <property type="component" value="Chromosome"/>
</dbReference>
<dbReference type="GO" id="GO:0005737">
    <property type="term" value="C:cytoplasm"/>
    <property type="evidence" value="ECO:0007669"/>
    <property type="project" value="UniProtKB-SubCell"/>
</dbReference>
<dbReference type="GO" id="GO:0071424">
    <property type="term" value="F:rRNA (cytosine-N4-)-methyltransferase activity"/>
    <property type="evidence" value="ECO:0007669"/>
    <property type="project" value="UniProtKB-UniRule"/>
</dbReference>
<dbReference type="GO" id="GO:0070475">
    <property type="term" value="P:rRNA base methylation"/>
    <property type="evidence" value="ECO:0007669"/>
    <property type="project" value="UniProtKB-UniRule"/>
</dbReference>
<dbReference type="FunFam" id="1.10.150.170:FF:000001">
    <property type="entry name" value="Ribosomal RNA small subunit methyltransferase H"/>
    <property type="match status" value="1"/>
</dbReference>
<dbReference type="Gene3D" id="1.10.150.170">
    <property type="entry name" value="Putative methyltransferase TM0872, insert domain"/>
    <property type="match status" value="1"/>
</dbReference>
<dbReference type="Gene3D" id="3.40.50.150">
    <property type="entry name" value="Vaccinia Virus protein VP39"/>
    <property type="match status" value="1"/>
</dbReference>
<dbReference type="HAMAP" id="MF_01007">
    <property type="entry name" value="16SrRNA_methyltr_H"/>
    <property type="match status" value="1"/>
</dbReference>
<dbReference type="InterPro" id="IPR002903">
    <property type="entry name" value="RsmH"/>
</dbReference>
<dbReference type="InterPro" id="IPR023397">
    <property type="entry name" value="SAM-dep_MeTrfase_MraW_recog"/>
</dbReference>
<dbReference type="InterPro" id="IPR029063">
    <property type="entry name" value="SAM-dependent_MTases_sf"/>
</dbReference>
<dbReference type="NCBIfam" id="TIGR00006">
    <property type="entry name" value="16S rRNA (cytosine(1402)-N(4))-methyltransferase RsmH"/>
    <property type="match status" value="1"/>
</dbReference>
<dbReference type="PANTHER" id="PTHR11265:SF0">
    <property type="entry name" value="12S RRNA N4-METHYLCYTIDINE METHYLTRANSFERASE"/>
    <property type="match status" value="1"/>
</dbReference>
<dbReference type="PANTHER" id="PTHR11265">
    <property type="entry name" value="S-ADENOSYL-METHYLTRANSFERASE MRAW"/>
    <property type="match status" value="1"/>
</dbReference>
<dbReference type="Pfam" id="PF01795">
    <property type="entry name" value="Methyltransf_5"/>
    <property type="match status" value="1"/>
</dbReference>
<dbReference type="PIRSF" id="PIRSF004486">
    <property type="entry name" value="MraW"/>
    <property type="match status" value="1"/>
</dbReference>
<dbReference type="SUPFAM" id="SSF81799">
    <property type="entry name" value="Putative methyltransferase TM0872, insert domain"/>
    <property type="match status" value="1"/>
</dbReference>
<dbReference type="SUPFAM" id="SSF53335">
    <property type="entry name" value="S-adenosyl-L-methionine-dependent methyltransferases"/>
    <property type="match status" value="1"/>
</dbReference>
<evidence type="ECO:0000255" key="1">
    <source>
        <dbReference type="HAMAP-Rule" id="MF_01007"/>
    </source>
</evidence>
<proteinExistence type="inferred from homology"/>
<comment type="function">
    <text evidence="1">Specifically methylates the N4 position of cytidine in position 1402 (C1402) of 16S rRNA.</text>
</comment>
<comment type="catalytic activity">
    <reaction evidence="1">
        <text>cytidine(1402) in 16S rRNA + S-adenosyl-L-methionine = N(4)-methylcytidine(1402) in 16S rRNA + S-adenosyl-L-homocysteine + H(+)</text>
        <dbReference type="Rhea" id="RHEA:42928"/>
        <dbReference type="Rhea" id="RHEA-COMP:10286"/>
        <dbReference type="Rhea" id="RHEA-COMP:10287"/>
        <dbReference type="ChEBI" id="CHEBI:15378"/>
        <dbReference type="ChEBI" id="CHEBI:57856"/>
        <dbReference type="ChEBI" id="CHEBI:59789"/>
        <dbReference type="ChEBI" id="CHEBI:74506"/>
        <dbReference type="ChEBI" id="CHEBI:82748"/>
        <dbReference type="EC" id="2.1.1.199"/>
    </reaction>
</comment>
<comment type="subcellular location">
    <subcellularLocation>
        <location evidence="1">Cytoplasm</location>
    </subcellularLocation>
</comment>
<comment type="similarity">
    <text evidence="1">Belongs to the methyltransferase superfamily. RsmH family.</text>
</comment>
<sequence length="316" mass="35562">MFDHTTVLLKETVDGLNIDPDGVYVDCTLGGAGHSEYLVQQLSDKGRLICFDQDMTAIENAKIRLAPYIERVTFIHSNFRYLKEELLAHGFEQVDGILYDLGVSSPQLDTPERGFSYHHDAPLDMRMDQTATLTAFEVVNQWAYEDLVRIFFRYGEEKFSKQVARKIEEARKSAPIETTGQLVELIKEGIPAAARRKGGHPAKRIFQAIRIAVNDELGAAEDSLVDAIDMINVGGRISVITFHSLEDRLCKTIFKEASSLPELPPNLPVIPDDMKPTLKLITRKPIVPSDEELEVNNRARSAKLRVVEKINDKGRE</sequence>
<reference key="1">
    <citation type="journal article" date="2008" name="J. Bacteriol.">
        <title>Complete genome sequence of the mosquitocidal bacterium Bacillus sphaericus C3-41 and comparison with those of closely related Bacillus species.</title>
        <authorList>
            <person name="Hu X."/>
            <person name="Fan W."/>
            <person name="Han B."/>
            <person name="Liu H."/>
            <person name="Zheng D."/>
            <person name="Li Q."/>
            <person name="Dong W."/>
            <person name="Yan J."/>
            <person name="Gao M."/>
            <person name="Berry C."/>
            <person name="Yuan Z."/>
        </authorList>
    </citation>
    <scope>NUCLEOTIDE SEQUENCE [LARGE SCALE GENOMIC DNA]</scope>
    <source>
        <strain>C3-41</strain>
    </source>
</reference>
<organism>
    <name type="scientific">Lysinibacillus sphaericus (strain C3-41)</name>
    <dbReference type="NCBI Taxonomy" id="444177"/>
    <lineage>
        <taxon>Bacteria</taxon>
        <taxon>Bacillati</taxon>
        <taxon>Bacillota</taxon>
        <taxon>Bacilli</taxon>
        <taxon>Bacillales</taxon>
        <taxon>Bacillaceae</taxon>
        <taxon>Lysinibacillus</taxon>
    </lineage>
</organism>
<gene>
    <name evidence="1" type="primary">rsmH</name>
    <name type="synonym">mraW</name>
    <name type="ordered locus">Bsph_1426</name>
</gene>
<keyword id="KW-0963">Cytoplasm</keyword>
<keyword id="KW-0489">Methyltransferase</keyword>
<keyword id="KW-0698">rRNA processing</keyword>
<keyword id="KW-0949">S-adenosyl-L-methionine</keyword>
<keyword id="KW-0808">Transferase</keyword>
<protein>
    <recommendedName>
        <fullName evidence="1">Ribosomal RNA small subunit methyltransferase H</fullName>
        <ecNumber evidence="1">2.1.1.199</ecNumber>
    </recommendedName>
    <alternativeName>
        <fullName evidence="1">16S rRNA m(4)C1402 methyltransferase</fullName>
    </alternativeName>
    <alternativeName>
        <fullName evidence="1">rRNA (cytosine-N(4)-)-methyltransferase RsmH</fullName>
    </alternativeName>
</protein>